<gene>
    <name type="ordered locus">MW2097</name>
</gene>
<feature type="chain" id="PRO_0000271314" description="Probable uridylyltransferase MW2097">
    <location>
        <begin position="1"/>
        <end position="395"/>
    </location>
</feature>
<feature type="binding site" evidence="1">
    <location>
        <begin position="99"/>
        <end position="102"/>
    </location>
    <ligand>
        <name>UTP</name>
        <dbReference type="ChEBI" id="CHEBI:46398"/>
    </ligand>
</feature>
<feature type="binding site" evidence="1">
    <location>
        <position position="113"/>
    </location>
    <ligand>
        <name>UTP</name>
        <dbReference type="ChEBI" id="CHEBI:46398"/>
    </ligand>
</feature>
<feature type="binding site" evidence="1">
    <location>
        <position position="178"/>
    </location>
    <ligand>
        <name>UTP</name>
        <dbReference type="ChEBI" id="CHEBI:46398"/>
    </ligand>
</feature>
<feature type="binding site" evidence="1">
    <location>
        <position position="204"/>
    </location>
    <ligand>
        <name>UTP</name>
        <dbReference type="ChEBI" id="CHEBI:46398"/>
    </ligand>
</feature>
<feature type="binding site" evidence="1">
    <location>
        <position position="235"/>
    </location>
    <ligand>
        <name>UTP</name>
        <dbReference type="ChEBI" id="CHEBI:46398"/>
    </ligand>
</feature>
<feature type="binding site" evidence="1">
    <location>
        <position position="344"/>
    </location>
    <ligand>
        <name>UTP</name>
        <dbReference type="ChEBI" id="CHEBI:46398"/>
    </ligand>
</feature>
<evidence type="ECO:0000250" key="1">
    <source>
        <dbReference type="UniProtKB" id="Q9M9P3"/>
    </source>
</evidence>
<evidence type="ECO:0000305" key="2"/>
<proteinExistence type="inferred from homology"/>
<comment type="similarity">
    <text evidence="2">Belongs to the UDPGP type 1 family.</text>
</comment>
<dbReference type="EC" id="2.7.7.-"/>
<dbReference type="EMBL" id="BA000033">
    <property type="protein sequence ID" value="BAB95962.1"/>
    <property type="molecule type" value="Genomic_DNA"/>
</dbReference>
<dbReference type="RefSeq" id="WP_000884735.1">
    <property type="nucleotide sequence ID" value="NC_003923.1"/>
</dbReference>
<dbReference type="SMR" id="Q7A0A0"/>
<dbReference type="KEGG" id="sam:MW2097"/>
<dbReference type="HOGENOM" id="CLU_025603_1_2_9"/>
<dbReference type="GO" id="GO:0070569">
    <property type="term" value="F:uridylyltransferase activity"/>
    <property type="evidence" value="ECO:0007669"/>
    <property type="project" value="InterPro"/>
</dbReference>
<dbReference type="CDD" id="cd04193">
    <property type="entry name" value="UDPGlcNAc_PPase"/>
    <property type="match status" value="1"/>
</dbReference>
<dbReference type="Gene3D" id="3.90.550.10">
    <property type="entry name" value="Spore Coat Polysaccharide Biosynthesis Protein SpsA, Chain A"/>
    <property type="match status" value="1"/>
</dbReference>
<dbReference type="InterPro" id="IPR029044">
    <property type="entry name" value="Nucleotide-diphossugar_trans"/>
</dbReference>
<dbReference type="InterPro" id="IPR039741">
    <property type="entry name" value="UDP-sugar_pyrophosphorylase"/>
</dbReference>
<dbReference type="InterPro" id="IPR002618">
    <property type="entry name" value="UDPGP_fam"/>
</dbReference>
<dbReference type="PANTHER" id="PTHR11952:SF2">
    <property type="entry name" value="LD24639P"/>
    <property type="match status" value="1"/>
</dbReference>
<dbReference type="PANTHER" id="PTHR11952">
    <property type="entry name" value="UDP- GLUCOSE PYROPHOSPHORYLASE"/>
    <property type="match status" value="1"/>
</dbReference>
<dbReference type="Pfam" id="PF01704">
    <property type="entry name" value="UDPGP"/>
    <property type="match status" value="1"/>
</dbReference>
<dbReference type="SUPFAM" id="SSF53448">
    <property type="entry name" value="Nucleotide-diphospho-sugar transferases"/>
    <property type="match status" value="1"/>
</dbReference>
<reference key="1">
    <citation type="journal article" date="2002" name="Lancet">
        <title>Genome and virulence determinants of high virulence community-acquired MRSA.</title>
        <authorList>
            <person name="Baba T."/>
            <person name="Takeuchi F."/>
            <person name="Kuroda M."/>
            <person name="Yuzawa H."/>
            <person name="Aoki K."/>
            <person name="Oguchi A."/>
            <person name="Nagai Y."/>
            <person name="Iwama N."/>
            <person name="Asano K."/>
            <person name="Naimi T."/>
            <person name="Kuroda H."/>
            <person name="Cui L."/>
            <person name="Yamamoto K."/>
            <person name="Hiramatsu K."/>
        </authorList>
    </citation>
    <scope>NUCLEOTIDE SEQUENCE [LARGE SCALE GENOMIC DNA]</scope>
    <source>
        <strain>MW2</strain>
    </source>
</reference>
<sequence>MLDKNQLAKYKQDHLCEYEKIMSNNEKEALEEKVASLDLDFIAKLYNDLYINKKTIDDVSAVSEVKYDIKSQMSDDEIKRLEEQGLQAIKEGQFAVLLMAGGQGTRLGYKGPKGSFEIEGVSLFELQANQLKTLNHQSGHTIQWYIMTSDINHEETLAYFEAHSYFGYDQEAIHFFKQDNIVALSEEGKLILNQQGRIMETPNGNGGVFKSLDKAGYLEEMSNNGVKYIFLNNIDNVLVKVLDPLFAGFTVEHDYDITSKTIQPKPGESVGRLVNVDCKDTVLEYSELDPEVANQFNNANIGIHAFKLGFILNAVNRELPYHLAIKNLKQLDENFGVIEQPTLKFELFYFDIFTYGTSFVTLQVPREEEFSPLKNKEGKDSVATATEDLRRMGLI</sequence>
<protein>
    <recommendedName>
        <fullName>Probable uridylyltransferase MW2097</fullName>
        <ecNumber>2.7.7.-</ecNumber>
    </recommendedName>
</protein>
<name>URTF_STAAW</name>
<accession>Q7A0A0</accession>
<organism>
    <name type="scientific">Staphylococcus aureus (strain MW2)</name>
    <dbReference type="NCBI Taxonomy" id="196620"/>
    <lineage>
        <taxon>Bacteria</taxon>
        <taxon>Bacillati</taxon>
        <taxon>Bacillota</taxon>
        <taxon>Bacilli</taxon>
        <taxon>Bacillales</taxon>
        <taxon>Staphylococcaceae</taxon>
        <taxon>Staphylococcus</taxon>
    </lineage>
</organism>
<keyword id="KW-0548">Nucleotidyltransferase</keyword>
<keyword id="KW-0808">Transferase</keyword>